<name>MP2K6_DANRE</name>
<organism>
    <name type="scientific">Danio rerio</name>
    <name type="common">Zebrafish</name>
    <name type="synonym">Brachydanio rerio</name>
    <dbReference type="NCBI Taxonomy" id="7955"/>
    <lineage>
        <taxon>Eukaryota</taxon>
        <taxon>Metazoa</taxon>
        <taxon>Chordata</taxon>
        <taxon>Craniata</taxon>
        <taxon>Vertebrata</taxon>
        <taxon>Euteleostomi</taxon>
        <taxon>Actinopterygii</taxon>
        <taxon>Neopterygii</taxon>
        <taxon>Teleostei</taxon>
        <taxon>Ostariophysi</taxon>
        <taxon>Cypriniformes</taxon>
        <taxon>Danionidae</taxon>
        <taxon>Danioninae</taxon>
        <taxon>Danio</taxon>
    </lineage>
</organism>
<keyword id="KW-0067">ATP-binding</keyword>
<keyword id="KW-0963">Cytoplasm</keyword>
<keyword id="KW-0206">Cytoskeleton</keyword>
<keyword id="KW-0418">Kinase</keyword>
<keyword id="KW-0547">Nucleotide-binding</keyword>
<keyword id="KW-0539">Nucleus</keyword>
<keyword id="KW-0597">Phosphoprotein</keyword>
<keyword id="KW-1185">Reference proteome</keyword>
<keyword id="KW-0723">Serine/threonine-protein kinase</keyword>
<keyword id="KW-0346">Stress response</keyword>
<keyword id="KW-0804">Transcription</keyword>
<keyword id="KW-0805">Transcription regulation</keyword>
<keyword id="KW-0808">Transferase</keyword>
<sequence length="361" mass="40594">MEGGSDKESKVFCDSPSPNPKGEMSVPSNVRGKKKLPKELKLPKEVFEKPAPAPTPPRDLDSKAYVTIGEKNFVVKADDLEQIGELGRGAYGVVDKMRHVPSGVIMAVKRIRATVNTQEQKRLLMDLDISMRTVDCFYTVTFYGALFREGDVWICMELMDTSLDKFYKQVHEKGKTIPEDILGKITVSIVKALEHLHSNLSVIHRDVKPSNVLINMQGQVKMCDFGISGYLVDSVAKTMDAGCKPYMAPERINPETNQKGYNVKSDIWSLGITMIELAILRFPYDSWGTPFQQLKQVVEEPSPQLPADRFSADFVDFTSQCLRKNSTERPTYTELMQHPFFTLHDSKDTDVASFVKTILGD</sequence>
<feature type="chain" id="PRO_0000345633" description="Dual specificity mitogen-activated protein kinase kinase 6">
    <location>
        <begin position="1"/>
        <end position="361"/>
    </location>
</feature>
<feature type="domain" description="Protein kinase" evidence="4">
    <location>
        <begin position="80"/>
        <end position="341"/>
    </location>
</feature>
<feature type="region of interest" description="Disordered" evidence="6">
    <location>
        <begin position="1"/>
        <end position="61"/>
    </location>
</feature>
<feature type="region of interest" description="D domain" evidence="1">
    <location>
        <begin position="30"/>
        <end position="46"/>
    </location>
</feature>
<feature type="region of interest" description="DVD domain" evidence="1">
    <location>
        <begin position="338"/>
        <end position="361"/>
    </location>
</feature>
<feature type="compositionally biased region" description="Basic and acidic residues" evidence="6">
    <location>
        <begin position="1"/>
        <end position="11"/>
    </location>
</feature>
<feature type="compositionally biased region" description="Basic and acidic residues" evidence="6">
    <location>
        <begin position="37"/>
        <end position="48"/>
    </location>
</feature>
<feature type="active site" description="Proton acceptor" evidence="4 5">
    <location>
        <position position="206"/>
    </location>
</feature>
<feature type="binding site" evidence="4">
    <location>
        <begin position="86"/>
        <end position="94"/>
    </location>
    <ligand>
        <name>ATP</name>
        <dbReference type="ChEBI" id="CHEBI:30616"/>
    </ligand>
</feature>
<feature type="binding site">
    <location>
        <position position="109"/>
    </location>
    <ligand>
        <name>ATP</name>
        <dbReference type="ChEBI" id="CHEBI:30616"/>
    </ligand>
</feature>
<feature type="modified residue" description="Phosphoserine; by MAPK3" evidence="1">
    <location>
        <position position="234"/>
    </location>
</feature>
<feature type="modified residue" description="Phosphothreonine; by MAPK3" evidence="1">
    <location>
        <position position="238"/>
    </location>
</feature>
<feature type="mutagenesis site" description="Acts as a dominant negative. Inhibits activation of MAP kinase p38 and disrupts cleavage." evidence="7">
    <original>K</original>
    <variation>A</variation>
    <location>
        <position position="109"/>
    </location>
</feature>
<feature type="mutagenesis site" description="Constitutively active." evidence="7">
    <original>SVAKT</original>
    <variation>EVAKE</variation>
    <location>
        <begin position="234"/>
        <end position="238"/>
    </location>
</feature>
<feature type="sequence conflict" description="In Ref. 1; BAB11809 and 2; AAH44129." evidence="9" ref="1 2">
    <original>S</original>
    <variation>SNV</variation>
    <location>
        <position position="28"/>
    </location>
</feature>
<dbReference type="EC" id="2.7.12.2"/>
<dbReference type="EMBL" id="AB030899">
    <property type="protein sequence ID" value="BAB11809.1"/>
    <property type="molecule type" value="mRNA"/>
</dbReference>
<dbReference type="EMBL" id="BC044129">
    <property type="protein sequence ID" value="AAH44129.1"/>
    <property type="molecule type" value="mRNA"/>
</dbReference>
<dbReference type="EMBL" id="BC071285">
    <property type="protein sequence ID" value="AAH71285.1"/>
    <property type="status" value="ALT_INIT"/>
    <property type="molecule type" value="mRNA"/>
</dbReference>
<dbReference type="RefSeq" id="NP_001299799.1">
    <property type="nucleotide sequence ID" value="NM_001312870.1"/>
</dbReference>
<dbReference type="SMR" id="Q9DGE0"/>
<dbReference type="FunCoup" id="Q9DGE0">
    <property type="interactions" value="1363"/>
</dbReference>
<dbReference type="STRING" id="7955.ENSDARP00000143278"/>
<dbReference type="PaxDb" id="7955-ENSDARP00000111296"/>
<dbReference type="Ensembl" id="ENSDART00000171268">
    <property type="protein sequence ID" value="ENSDARP00000141647"/>
    <property type="gene ID" value="ENSDARG00000099184"/>
</dbReference>
<dbReference type="GeneID" id="65239"/>
<dbReference type="KEGG" id="dre:65239"/>
<dbReference type="AGR" id="ZFIN:ZDB-GENE-010202-3"/>
<dbReference type="CTD" id="5608"/>
<dbReference type="ZFIN" id="ZDB-GENE-010202-3">
    <property type="gene designation" value="map2k6"/>
</dbReference>
<dbReference type="eggNOG" id="KOG0984">
    <property type="taxonomic scope" value="Eukaryota"/>
</dbReference>
<dbReference type="HOGENOM" id="CLU_000288_63_23_1"/>
<dbReference type="InParanoid" id="Q9DGE0"/>
<dbReference type="OrthoDB" id="10252354at2759"/>
<dbReference type="PhylomeDB" id="Q9DGE0"/>
<dbReference type="TreeFam" id="TF350701"/>
<dbReference type="Reactome" id="R-DRE-168638">
    <property type="pathway name" value="NOD1/2 Signaling Pathway"/>
</dbReference>
<dbReference type="Reactome" id="R-DRE-2559580">
    <property type="pathway name" value="Oxidative Stress Induced Senescence"/>
</dbReference>
<dbReference type="Reactome" id="R-DRE-450302">
    <property type="pathway name" value="activated TAK1 mediates p38 MAPK activation"/>
</dbReference>
<dbReference type="Reactome" id="R-DRE-9833482">
    <property type="pathway name" value="PKR-mediated signaling"/>
</dbReference>
<dbReference type="PRO" id="PR:Q9DGE0"/>
<dbReference type="Proteomes" id="UP000000437">
    <property type="component" value="Chromosome 12"/>
</dbReference>
<dbReference type="Bgee" id="ENSDARG00000099184">
    <property type="expression patterns" value="Expressed in gastrula and 26 other cell types or tissues"/>
</dbReference>
<dbReference type="ExpressionAtlas" id="Q9DGE0">
    <property type="expression patterns" value="baseline and differential"/>
</dbReference>
<dbReference type="GO" id="GO:0005737">
    <property type="term" value="C:cytoplasm"/>
    <property type="evidence" value="ECO:0007669"/>
    <property type="project" value="UniProtKB-SubCell"/>
</dbReference>
<dbReference type="GO" id="GO:0005856">
    <property type="term" value="C:cytoskeleton"/>
    <property type="evidence" value="ECO:0007669"/>
    <property type="project" value="UniProtKB-SubCell"/>
</dbReference>
<dbReference type="GO" id="GO:0005634">
    <property type="term" value="C:nucleus"/>
    <property type="evidence" value="ECO:0007669"/>
    <property type="project" value="UniProtKB-SubCell"/>
</dbReference>
<dbReference type="GO" id="GO:0005524">
    <property type="term" value="F:ATP binding"/>
    <property type="evidence" value="ECO:0007669"/>
    <property type="project" value="UniProtKB-KW"/>
</dbReference>
<dbReference type="GO" id="GO:0004708">
    <property type="term" value="F:MAP kinase kinase activity"/>
    <property type="evidence" value="ECO:0000318"/>
    <property type="project" value="GO_Central"/>
</dbReference>
<dbReference type="GO" id="GO:0106310">
    <property type="term" value="F:protein serine kinase activity"/>
    <property type="evidence" value="ECO:0007669"/>
    <property type="project" value="RHEA"/>
</dbReference>
<dbReference type="GO" id="GO:0004674">
    <property type="term" value="F:protein serine/threonine kinase activity"/>
    <property type="evidence" value="ECO:0007669"/>
    <property type="project" value="UniProtKB-KW"/>
</dbReference>
<dbReference type="GO" id="GO:0004713">
    <property type="term" value="F:protein tyrosine kinase activity"/>
    <property type="evidence" value="ECO:0007669"/>
    <property type="project" value="RHEA"/>
</dbReference>
<dbReference type="GO" id="GO:0000165">
    <property type="term" value="P:MAPK cascade"/>
    <property type="evidence" value="ECO:0000318"/>
    <property type="project" value="GO_Central"/>
</dbReference>
<dbReference type="GO" id="GO:1900745">
    <property type="term" value="P:positive regulation of p38MAPK cascade"/>
    <property type="evidence" value="ECO:0000315"/>
    <property type="project" value="UniProtKB"/>
</dbReference>
<dbReference type="CDD" id="cd06617">
    <property type="entry name" value="PKc_MKK3_6"/>
    <property type="match status" value="1"/>
</dbReference>
<dbReference type="FunFam" id="3.30.200.20:FF:000040">
    <property type="entry name" value="Dual specificity mitogen-activated protein kinase kinase"/>
    <property type="match status" value="1"/>
</dbReference>
<dbReference type="FunFam" id="1.10.510.10:FF:000158">
    <property type="entry name" value="Dual specificity mitogen-activated protein kinase kinase 6"/>
    <property type="match status" value="1"/>
</dbReference>
<dbReference type="Gene3D" id="3.30.200.20">
    <property type="entry name" value="Phosphorylase Kinase, domain 1"/>
    <property type="match status" value="1"/>
</dbReference>
<dbReference type="Gene3D" id="1.10.510.10">
    <property type="entry name" value="Transferase(Phosphotransferase) domain 1"/>
    <property type="match status" value="1"/>
</dbReference>
<dbReference type="InterPro" id="IPR011009">
    <property type="entry name" value="Kinase-like_dom_sf"/>
</dbReference>
<dbReference type="InterPro" id="IPR000719">
    <property type="entry name" value="Prot_kinase_dom"/>
</dbReference>
<dbReference type="InterPro" id="IPR008271">
    <property type="entry name" value="Ser/Thr_kinase_AS"/>
</dbReference>
<dbReference type="PANTHER" id="PTHR48013">
    <property type="entry name" value="DUAL SPECIFICITY MITOGEN-ACTIVATED PROTEIN KINASE KINASE 5-RELATED"/>
    <property type="match status" value="1"/>
</dbReference>
<dbReference type="PANTHER" id="PTHR48013:SF12">
    <property type="entry name" value="DUAL SPECIFICITY MITOGEN-ACTIVATED PROTEIN KINASE KINASE 6"/>
    <property type="match status" value="1"/>
</dbReference>
<dbReference type="Pfam" id="PF00069">
    <property type="entry name" value="Pkinase"/>
    <property type="match status" value="1"/>
</dbReference>
<dbReference type="SMART" id="SM00220">
    <property type="entry name" value="S_TKc"/>
    <property type="match status" value="1"/>
</dbReference>
<dbReference type="SUPFAM" id="SSF56112">
    <property type="entry name" value="Protein kinase-like (PK-like)"/>
    <property type="match status" value="1"/>
</dbReference>
<dbReference type="PROSITE" id="PS50011">
    <property type="entry name" value="PROTEIN_KINASE_DOM"/>
    <property type="match status" value="1"/>
</dbReference>
<dbReference type="PROSITE" id="PS00108">
    <property type="entry name" value="PROTEIN_KINASE_ST"/>
    <property type="match status" value="1"/>
</dbReference>
<evidence type="ECO:0000250" key="1"/>
<evidence type="ECO:0000250" key="2">
    <source>
        <dbReference type="UniProtKB" id="P52564"/>
    </source>
</evidence>
<evidence type="ECO:0000255" key="3"/>
<evidence type="ECO:0000255" key="4">
    <source>
        <dbReference type="PROSITE-ProRule" id="PRU00159"/>
    </source>
</evidence>
<evidence type="ECO:0000255" key="5">
    <source>
        <dbReference type="PROSITE-ProRule" id="PRU10027"/>
    </source>
</evidence>
<evidence type="ECO:0000256" key="6">
    <source>
        <dbReference type="SAM" id="MobiDB-lite"/>
    </source>
</evidence>
<evidence type="ECO:0000269" key="7">
    <source>
    </source>
</evidence>
<evidence type="ECO:0000303" key="8">
    <source>
    </source>
</evidence>
<evidence type="ECO:0000305" key="9"/>
<evidence type="ECO:0000305" key="10">
    <source>
    </source>
</evidence>
<evidence type="ECO:0000312" key="11">
    <source>
        <dbReference type="EMBL" id="AAH44129.1"/>
    </source>
</evidence>
<evidence type="ECO:0000312" key="12">
    <source>
        <dbReference type="EMBL" id="AAH71285.1"/>
    </source>
</evidence>
<evidence type="ECO:0000312" key="13">
    <source>
        <dbReference type="EMBL" id="BAB11809.1"/>
    </source>
</evidence>
<evidence type="ECO:0000312" key="14">
    <source>
        <dbReference type="ZFIN" id="ZDB-GENE-010202-3"/>
    </source>
</evidence>
<protein>
    <recommendedName>
        <fullName evidence="2">Dual specificity mitogen-activated protein kinase kinase 6</fullName>
        <shortName evidence="2">MAP kinase kinase 6</shortName>
        <shortName evidence="2">MAPKK 6</shortName>
        <ecNumber>2.7.12.2</ecNumber>
    </recommendedName>
    <alternativeName>
        <fullName evidence="8">Mitogen-activated protein kinase kinase 3</fullName>
        <shortName evidence="13">zMKK3</shortName>
    </alternativeName>
</protein>
<reference evidence="9 13" key="1">
    <citation type="journal article" date="2000" name="J. Cell Biol.">
        <title>Asymmetric p38 activation in zebrafish: its possible role in symmetric and synchronous cleavage.</title>
        <authorList>
            <person name="Fujii R."/>
            <person name="Yamashita S."/>
            <person name="Hibi M."/>
            <person name="Hirano T."/>
        </authorList>
    </citation>
    <scope>NUCLEOTIDE SEQUENCE [MRNA]</scope>
    <scope>FUNCTION</scope>
    <scope>DEVELOPMENTAL STAGE</scope>
    <scope>MUTAGENESIS OF LYS-109 AND 234-SER--THR-238</scope>
    <source>
        <tissue evidence="7">Embryo</tissue>
    </source>
</reference>
<reference evidence="11" key="2">
    <citation type="submission" date="2004-06" db="EMBL/GenBank/DDBJ databases">
        <authorList>
            <consortium name="NIH - Zebrafish Gene Collection (ZGC) project"/>
        </authorList>
    </citation>
    <scope>NUCLEOTIDE SEQUENCE [LARGE SCALE MRNA]</scope>
    <source>
        <strain evidence="11">AB</strain>
        <tissue evidence="12">Embryo</tissue>
    </source>
</reference>
<proteinExistence type="evidence at protein level"/>
<comment type="function">
    <text evidence="7">Dual specificity protein kinase which acts as an essential component of the MAP kinase signal transduction pathway. Catalyzes the concomitant phosphorylation of a threonine and a tyrosine residue in the MAP kinases p38 and plays an important role in the regulation of cellular responses to cytokines and all kinds of stresses. The p38 MAP kinase signal transduction pathway leads to direct activation of transcription factors. Phosphorylation by MAP2K6 asymmetrically activates p38 on one side of the blastodisc, an event which is necessary for blastomere cleavage.</text>
</comment>
<comment type="catalytic activity">
    <reaction evidence="9">
        <text>L-seryl-[protein] + ATP = O-phospho-L-seryl-[protein] + ADP + H(+)</text>
        <dbReference type="Rhea" id="RHEA:17989"/>
        <dbReference type="Rhea" id="RHEA-COMP:9863"/>
        <dbReference type="Rhea" id="RHEA-COMP:11604"/>
        <dbReference type="ChEBI" id="CHEBI:15378"/>
        <dbReference type="ChEBI" id="CHEBI:29999"/>
        <dbReference type="ChEBI" id="CHEBI:30616"/>
        <dbReference type="ChEBI" id="CHEBI:83421"/>
        <dbReference type="ChEBI" id="CHEBI:456216"/>
        <dbReference type="EC" id="2.7.12.2"/>
    </reaction>
</comment>
<comment type="catalytic activity">
    <reaction evidence="9">
        <text>L-threonyl-[protein] + ATP = O-phospho-L-threonyl-[protein] + ADP + H(+)</text>
        <dbReference type="Rhea" id="RHEA:46608"/>
        <dbReference type="Rhea" id="RHEA-COMP:11060"/>
        <dbReference type="Rhea" id="RHEA-COMP:11605"/>
        <dbReference type="ChEBI" id="CHEBI:15378"/>
        <dbReference type="ChEBI" id="CHEBI:30013"/>
        <dbReference type="ChEBI" id="CHEBI:30616"/>
        <dbReference type="ChEBI" id="CHEBI:61977"/>
        <dbReference type="ChEBI" id="CHEBI:456216"/>
        <dbReference type="EC" id="2.7.12.2"/>
    </reaction>
</comment>
<comment type="catalytic activity">
    <reaction evidence="9">
        <text>L-tyrosyl-[protein] + ATP = O-phospho-L-tyrosyl-[protein] + ADP + H(+)</text>
        <dbReference type="Rhea" id="RHEA:10596"/>
        <dbReference type="Rhea" id="RHEA-COMP:10136"/>
        <dbReference type="Rhea" id="RHEA-COMP:20101"/>
        <dbReference type="ChEBI" id="CHEBI:15378"/>
        <dbReference type="ChEBI" id="CHEBI:30616"/>
        <dbReference type="ChEBI" id="CHEBI:46858"/>
        <dbReference type="ChEBI" id="CHEBI:61978"/>
        <dbReference type="ChEBI" id="CHEBI:456216"/>
        <dbReference type="EC" id="2.7.12.2"/>
    </reaction>
</comment>
<comment type="activity regulation">
    <text evidence="1">Activated by dual phosphorylation on Ser-234 and Thr-238 in response to a variety of cellular stresses, including UV radiation, osmotic shock, hypoxia, inflammatory cytokines, interferon gamma (IFNG), and less often by growth factors. MAP2K6/MKK6 is activated by the majority of M3Ks (By similarity).</text>
</comment>
<comment type="subunit">
    <text evidence="1">Dimer. Interacts (via its D domain) with its MAP kinase substrates. Interacts (via its DVD domain) with MAP3Ks activators.</text>
</comment>
<comment type="subcellular location">
    <subcellularLocation>
        <location evidence="2">Nucleus</location>
    </subcellularLocation>
    <subcellularLocation>
        <location evidence="2">Cytoplasm</location>
    </subcellularLocation>
    <subcellularLocation>
        <location evidence="2">Cytoplasm</location>
        <location evidence="2">Cytoskeleton</location>
    </subcellularLocation>
    <text evidence="2">Binds to microtubules.</text>
</comment>
<comment type="developmental stage">
    <text evidence="7">Expressed both maternally and zygotically. Zygotic expression continues throughout development.</text>
</comment>
<comment type="domain">
    <text evidence="1">The DVD domain (residues 338-361) contains a conserved docking site and is found in the mammalian MAP kinase kinases (MAP2Ks). The DVD sites bind to their specific upstream MAP kinase kinase kinases (MAP3Ks) and are essential for activation (By similarity).</text>
</comment>
<comment type="domain">
    <text evidence="1">The D domain (residues 30-46) contains a conserved docking site and is required for the binding to MAPK substrates.</text>
</comment>
<comment type="PTM">
    <text evidence="2">Weakly autophosphorylated. Phosphorylated at Ser-234 and Thr-238 by the majority of M3Ks.</text>
</comment>
<comment type="similarity">
    <text evidence="3">Belongs to the protein kinase superfamily. STE Ser/Thr protein kinase family. MAP kinase kinase subfamily.</text>
</comment>
<comment type="caution">
    <text evidence="9 10">Was originally thought to be a Map2k3 protein but sequence analysis shows closer similarity to the Map2k6 proteins.</text>
</comment>
<comment type="sequence caution" evidence="9">
    <conflict type="erroneous initiation">
        <sequence resource="EMBL-CDS" id="AAH71285"/>
    </conflict>
    <text>Truncated N-terminus.</text>
</comment>
<gene>
    <name evidence="2" type="primary">map2k6</name>
    <name evidence="12 14" type="synonym">map2k3</name>
</gene>
<accession>Q9DGE0</accession>
<accession>Q6IQW6</accession>